<feature type="chain" id="PRO_0000374089" description="tRNA-2-methylthio-N(6)-dimethylallyladenosine synthase">
    <location>
        <begin position="1"/>
        <end position="483"/>
    </location>
</feature>
<feature type="domain" description="MTTase N-terminal" evidence="1">
    <location>
        <begin position="31"/>
        <end position="148"/>
    </location>
</feature>
<feature type="domain" description="Radical SAM core" evidence="2">
    <location>
        <begin position="178"/>
        <end position="410"/>
    </location>
</feature>
<feature type="domain" description="TRAM" evidence="1">
    <location>
        <begin position="413"/>
        <end position="477"/>
    </location>
</feature>
<feature type="binding site" evidence="1">
    <location>
        <position position="40"/>
    </location>
    <ligand>
        <name>[4Fe-4S] cluster</name>
        <dbReference type="ChEBI" id="CHEBI:49883"/>
        <label>1</label>
    </ligand>
</feature>
<feature type="binding site" evidence="1">
    <location>
        <position position="77"/>
    </location>
    <ligand>
        <name>[4Fe-4S] cluster</name>
        <dbReference type="ChEBI" id="CHEBI:49883"/>
        <label>1</label>
    </ligand>
</feature>
<feature type="binding site" evidence="1">
    <location>
        <position position="111"/>
    </location>
    <ligand>
        <name>[4Fe-4S] cluster</name>
        <dbReference type="ChEBI" id="CHEBI:49883"/>
        <label>1</label>
    </ligand>
</feature>
<feature type="binding site" evidence="1">
    <location>
        <position position="192"/>
    </location>
    <ligand>
        <name>[4Fe-4S] cluster</name>
        <dbReference type="ChEBI" id="CHEBI:49883"/>
        <label>2</label>
        <note>4Fe-4S-S-AdoMet</note>
    </ligand>
</feature>
<feature type="binding site" evidence="1">
    <location>
        <position position="196"/>
    </location>
    <ligand>
        <name>[4Fe-4S] cluster</name>
        <dbReference type="ChEBI" id="CHEBI:49883"/>
        <label>2</label>
        <note>4Fe-4S-S-AdoMet</note>
    </ligand>
</feature>
<feature type="binding site" evidence="1">
    <location>
        <position position="199"/>
    </location>
    <ligand>
        <name>[4Fe-4S] cluster</name>
        <dbReference type="ChEBI" id="CHEBI:49883"/>
        <label>2</label>
        <note>4Fe-4S-S-AdoMet</note>
    </ligand>
</feature>
<sequence length="483" mass="54316">MTVQTFIPNGAKAASENTVTQPTHTTDVSIKKLYIETQGCQMNEYDSHRMADLLGDSHGYVLTNNPNEADILLMNTCSIREKAQEKVFSELGRWRKLKEQNPDLVIGVGGCVASQEGDNIQKRAPYVDMIFGPQTLHRLPQMLDQHHAQVEKPKKEKIKLVDISFPDIEKFDFLPEPRVEGFKAFVSIMEGCSKYCSFCVVPYTRGEEVSRPLDDVLAEIAGLAEKGVREISLLGQNVNGYRGETFEGGICTFPELLRLVAEIPGIGRLRYTTSHPLEFSDELIQCYEDLPQMVSHLHLPVQSGSNDVLKAMKRNHTIDVYIDKIAKLRKIRPDMHLSSDFIIGFPGETDENFAETLQFIKDLDFDHSYSFVYSKRPGTPASDLPDTTPEHVKKERLAQVQQVIKQSSIEKTDAMLGKIERVLIEKVSDQDPNILVGTADNTRLVTFVGDASWIGRFAEIEITEIKTLNLVYGELLNLEPDVA</sequence>
<reference key="1">
    <citation type="journal article" date="2008" name="Antimicrob. Agents Chemother.">
        <title>Whole-genome pyrosequencing of an epidemic multidrug-resistant Acinetobacter baumannii strain belonging to the European clone II group.</title>
        <authorList>
            <person name="Iacono M."/>
            <person name="Villa L."/>
            <person name="Fortini D."/>
            <person name="Bordoni R."/>
            <person name="Imperi F."/>
            <person name="Bonnal R.J."/>
            <person name="Sicheritz-Ponten T."/>
            <person name="De Bellis G."/>
            <person name="Visca P."/>
            <person name="Cassone A."/>
            <person name="Carattoli A."/>
        </authorList>
    </citation>
    <scope>NUCLEOTIDE SEQUENCE [LARGE SCALE GENOMIC DNA]</scope>
    <source>
        <strain>ACICU</strain>
    </source>
</reference>
<accession>B2HZ55</accession>
<protein>
    <recommendedName>
        <fullName evidence="1">tRNA-2-methylthio-N(6)-dimethylallyladenosine synthase</fullName>
        <ecNumber evidence="1">2.8.4.3</ecNumber>
    </recommendedName>
    <alternativeName>
        <fullName evidence="1">(Dimethylallyl)adenosine tRNA methylthiotransferase MiaB</fullName>
    </alternativeName>
    <alternativeName>
        <fullName evidence="1">tRNA-i(6)A37 methylthiotransferase</fullName>
    </alternativeName>
</protein>
<proteinExistence type="inferred from homology"/>
<keyword id="KW-0004">4Fe-4S</keyword>
<keyword id="KW-0963">Cytoplasm</keyword>
<keyword id="KW-0408">Iron</keyword>
<keyword id="KW-0411">Iron-sulfur</keyword>
<keyword id="KW-0479">Metal-binding</keyword>
<keyword id="KW-0949">S-adenosyl-L-methionine</keyword>
<keyword id="KW-0808">Transferase</keyword>
<keyword id="KW-0819">tRNA processing</keyword>
<evidence type="ECO:0000255" key="1">
    <source>
        <dbReference type="HAMAP-Rule" id="MF_01864"/>
    </source>
</evidence>
<evidence type="ECO:0000255" key="2">
    <source>
        <dbReference type="PROSITE-ProRule" id="PRU01266"/>
    </source>
</evidence>
<organism>
    <name type="scientific">Acinetobacter baumannii (strain ACICU)</name>
    <dbReference type="NCBI Taxonomy" id="405416"/>
    <lineage>
        <taxon>Bacteria</taxon>
        <taxon>Pseudomonadati</taxon>
        <taxon>Pseudomonadota</taxon>
        <taxon>Gammaproteobacteria</taxon>
        <taxon>Moraxellales</taxon>
        <taxon>Moraxellaceae</taxon>
        <taxon>Acinetobacter</taxon>
        <taxon>Acinetobacter calcoaceticus/baumannii complex</taxon>
    </lineage>
</organism>
<comment type="function">
    <text evidence="1">Catalyzes the methylthiolation of N6-(dimethylallyl)adenosine (i(6)A), leading to the formation of 2-methylthio-N6-(dimethylallyl)adenosine (ms(2)i(6)A) at position 37 in tRNAs that read codons beginning with uridine.</text>
</comment>
<comment type="catalytic activity">
    <reaction evidence="1">
        <text>N(6)-dimethylallyladenosine(37) in tRNA + (sulfur carrier)-SH + AH2 + 2 S-adenosyl-L-methionine = 2-methylsulfanyl-N(6)-dimethylallyladenosine(37) in tRNA + (sulfur carrier)-H + 5'-deoxyadenosine + L-methionine + A + S-adenosyl-L-homocysteine + 2 H(+)</text>
        <dbReference type="Rhea" id="RHEA:37067"/>
        <dbReference type="Rhea" id="RHEA-COMP:10375"/>
        <dbReference type="Rhea" id="RHEA-COMP:10376"/>
        <dbReference type="Rhea" id="RHEA-COMP:14737"/>
        <dbReference type="Rhea" id="RHEA-COMP:14739"/>
        <dbReference type="ChEBI" id="CHEBI:13193"/>
        <dbReference type="ChEBI" id="CHEBI:15378"/>
        <dbReference type="ChEBI" id="CHEBI:17319"/>
        <dbReference type="ChEBI" id="CHEBI:17499"/>
        <dbReference type="ChEBI" id="CHEBI:29917"/>
        <dbReference type="ChEBI" id="CHEBI:57844"/>
        <dbReference type="ChEBI" id="CHEBI:57856"/>
        <dbReference type="ChEBI" id="CHEBI:59789"/>
        <dbReference type="ChEBI" id="CHEBI:64428"/>
        <dbReference type="ChEBI" id="CHEBI:74415"/>
        <dbReference type="ChEBI" id="CHEBI:74417"/>
        <dbReference type="EC" id="2.8.4.3"/>
    </reaction>
</comment>
<comment type="cofactor">
    <cofactor evidence="1">
        <name>[4Fe-4S] cluster</name>
        <dbReference type="ChEBI" id="CHEBI:49883"/>
    </cofactor>
    <text evidence="1">Binds 2 [4Fe-4S] clusters. One cluster is coordinated with 3 cysteines and an exchangeable S-adenosyl-L-methionine.</text>
</comment>
<comment type="subunit">
    <text evidence="1">Monomer.</text>
</comment>
<comment type="subcellular location">
    <subcellularLocation>
        <location evidence="1">Cytoplasm</location>
    </subcellularLocation>
</comment>
<comment type="similarity">
    <text evidence="1">Belongs to the methylthiotransferase family. MiaB subfamily.</text>
</comment>
<dbReference type="EC" id="2.8.4.3" evidence="1"/>
<dbReference type="EMBL" id="CP000863">
    <property type="protein sequence ID" value="ACC58537.1"/>
    <property type="molecule type" value="Genomic_DNA"/>
</dbReference>
<dbReference type="RefSeq" id="WP_000218140.1">
    <property type="nucleotide sequence ID" value="NZ_CP031380.1"/>
</dbReference>
<dbReference type="SMR" id="B2HZ55"/>
<dbReference type="KEGG" id="abc:ACICU_03225"/>
<dbReference type="HOGENOM" id="CLU_018697_2_0_6"/>
<dbReference type="Proteomes" id="UP000008839">
    <property type="component" value="Chromosome"/>
</dbReference>
<dbReference type="GO" id="GO:0005829">
    <property type="term" value="C:cytosol"/>
    <property type="evidence" value="ECO:0007669"/>
    <property type="project" value="TreeGrafter"/>
</dbReference>
<dbReference type="GO" id="GO:0051539">
    <property type="term" value="F:4 iron, 4 sulfur cluster binding"/>
    <property type="evidence" value="ECO:0007669"/>
    <property type="project" value="UniProtKB-UniRule"/>
</dbReference>
<dbReference type="GO" id="GO:0046872">
    <property type="term" value="F:metal ion binding"/>
    <property type="evidence" value="ECO:0007669"/>
    <property type="project" value="UniProtKB-KW"/>
</dbReference>
<dbReference type="GO" id="GO:0035597">
    <property type="term" value="F:N6-isopentenyladenosine methylthiotransferase activity"/>
    <property type="evidence" value="ECO:0007669"/>
    <property type="project" value="TreeGrafter"/>
</dbReference>
<dbReference type="CDD" id="cd01335">
    <property type="entry name" value="Radical_SAM"/>
    <property type="match status" value="1"/>
</dbReference>
<dbReference type="FunFam" id="3.40.50.12160:FF:000001">
    <property type="entry name" value="tRNA-2-methylthio-N(6)-dimethylallyladenosine synthase"/>
    <property type="match status" value="1"/>
</dbReference>
<dbReference type="FunFam" id="3.80.30.20:FF:000001">
    <property type="entry name" value="tRNA-2-methylthio-N(6)-dimethylallyladenosine synthase 2"/>
    <property type="match status" value="1"/>
</dbReference>
<dbReference type="Gene3D" id="3.40.50.12160">
    <property type="entry name" value="Methylthiotransferase, N-terminal domain"/>
    <property type="match status" value="1"/>
</dbReference>
<dbReference type="Gene3D" id="3.80.30.20">
    <property type="entry name" value="tm_1862 like domain"/>
    <property type="match status" value="1"/>
</dbReference>
<dbReference type="HAMAP" id="MF_01864">
    <property type="entry name" value="tRNA_metthiotr_MiaB"/>
    <property type="match status" value="1"/>
</dbReference>
<dbReference type="InterPro" id="IPR006638">
    <property type="entry name" value="Elp3/MiaA/NifB-like_rSAM"/>
</dbReference>
<dbReference type="InterPro" id="IPR005839">
    <property type="entry name" value="Methylthiotransferase"/>
</dbReference>
<dbReference type="InterPro" id="IPR020612">
    <property type="entry name" value="Methylthiotransferase_CS"/>
</dbReference>
<dbReference type="InterPro" id="IPR013848">
    <property type="entry name" value="Methylthiotransferase_N"/>
</dbReference>
<dbReference type="InterPro" id="IPR038135">
    <property type="entry name" value="Methylthiotransferase_N_sf"/>
</dbReference>
<dbReference type="InterPro" id="IPR006463">
    <property type="entry name" value="MiaB_methiolase"/>
</dbReference>
<dbReference type="InterPro" id="IPR007197">
    <property type="entry name" value="rSAM"/>
</dbReference>
<dbReference type="InterPro" id="IPR023404">
    <property type="entry name" value="rSAM_horseshoe"/>
</dbReference>
<dbReference type="InterPro" id="IPR002792">
    <property type="entry name" value="TRAM_dom"/>
</dbReference>
<dbReference type="NCBIfam" id="TIGR01574">
    <property type="entry name" value="miaB-methiolase"/>
    <property type="match status" value="1"/>
</dbReference>
<dbReference type="NCBIfam" id="TIGR00089">
    <property type="entry name" value="MiaB/RimO family radical SAM methylthiotransferase"/>
    <property type="match status" value="1"/>
</dbReference>
<dbReference type="PANTHER" id="PTHR43020">
    <property type="entry name" value="CDK5 REGULATORY SUBUNIT-ASSOCIATED PROTEIN 1"/>
    <property type="match status" value="1"/>
</dbReference>
<dbReference type="PANTHER" id="PTHR43020:SF2">
    <property type="entry name" value="MITOCHONDRIAL TRNA METHYLTHIOTRANSFERASE CDK5RAP1"/>
    <property type="match status" value="1"/>
</dbReference>
<dbReference type="Pfam" id="PF04055">
    <property type="entry name" value="Radical_SAM"/>
    <property type="match status" value="1"/>
</dbReference>
<dbReference type="Pfam" id="PF01938">
    <property type="entry name" value="TRAM"/>
    <property type="match status" value="1"/>
</dbReference>
<dbReference type="Pfam" id="PF00919">
    <property type="entry name" value="UPF0004"/>
    <property type="match status" value="1"/>
</dbReference>
<dbReference type="SFLD" id="SFLDF00273">
    <property type="entry name" value="(dimethylallyl)adenosine_tRNA"/>
    <property type="match status" value="1"/>
</dbReference>
<dbReference type="SFLD" id="SFLDG01082">
    <property type="entry name" value="B12-binding_domain_containing"/>
    <property type="match status" value="1"/>
</dbReference>
<dbReference type="SFLD" id="SFLDG01061">
    <property type="entry name" value="methylthiotransferase"/>
    <property type="match status" value="1"/>
</dbReference>
<dbReference type="SMART" id="SM00729">
    <property type="entry name" value="Elp3"/>
    <property type="match status" value="1"/>
</dbReference>
<dbReference type="SUPFAM" id="SSF102114">
    <property type="entry name" value="Radical SAM enzymes"/>
    <property type="match status" value="1"/>
</dbReference>
<dbReference type="PROSITE" id="PS51449">
    <property type="entry name" value="MTTASE_N"/>
    <property type="match status" value="1"/>
</dbReference>
<dbReference type="PROSITE" id="PS01278">
    <property type="entry name" value="MTTASE_RADICAL"/>
    <property type="match status" value="1"/>
</dbReference>
<dbReference type="PROSITE" id="PS51918">
    <property type="entry name" value="RADICAL_SAM"/>
    <property type="match status" value="1"/>
</dbReference>
<dbReference type="PROSITE" id="PS50926">
    <property type="entry name" value="TRAM"/>
    <property type="match status" value="1"/>
</dbReference>
<name>MIAB_ACIBC</name>
<gene>
    <name evidence="1" type="primary">miaB</name>
    <name type="ordered locus">ACICU_03225</name>
</gene>